<proteinExistence type="inferred from homology"/>
<evidence type="ECO:0000255" key="1">
    <source>
        <dbReference type="HAMAP-Rule" id="MF_01277"/>
    </source>
</evidence>
<reference key="1">
    <citation type="journal article" date="2008" name="Genome Res.">
        <title>Comparative genome analysis of Salmonella enteritidis PT4 and Salmonella gallinarum 287/91 provides insights into evolutionary and host adaptation pathways.</title>
        <authorList>
            <person name="Thomson N.R."/>
            <person name="Clayton D.J."/>
            <person name="Windhorst D."/>
            <person name="Vernikos G."/>
            <person name="Davidson S."/>
            <person name="Churcher C."/>
            <person name="Quail M.A."/>
            <person name="Stevens M."/>
            <person name="Jones M.A."/>
            <person name="Watson M."/>
            <person name="Barron A."/>
            <person name="Layton A."/>
            <person name="Pickard D."/>
            <person name="Kingsley R.A."/>
            <person name="Bignell A."/>
            <person name="Clark L."/>
            <person name="Harris B."/>
            <person name="Ormond D."/>
            <person name="Abdellah Z."/>
            <person name="Brooks K."/>
            <person name="Cherevach I."/>
            <person name="Chillingworth T."/>
            <person name="Woodward J."/>
            <person name="Norberczak H."/>
            <person name="Lord A."/>
            <person name="Arrowsmith C."/>
            <person name="Jagels K."/>
            <person name="Moule S."/>
            <person name="Mungall K."/>
            <person name="Saunders M."/>
            <person name="Whitehead S."/>
            <person name="Chabalgoity J.A."/>
            <person name="Maskell D."/>
            <person name="Humphreys T."/>
            <person name="Roberts M."/>
            <person name="Barrow P.A."/>
            <person name="Dougan G."/>
            <person name="Parkhill J."/>
        </authorList>
    </citation>
    <scope>NUCLEOTIDE SEQUENCE [LARGE SCALE GENOMIC DNA]</scope>
    <source>
        <strain>P125109</strain>
    </source>
</reference>
<keyword id="KW-0238">DNA-binding</keyword>
<keyword id="KW-0658">Purine biosynthesis</keyword>
<keyword id="KW-0678">Repressor</keyword>
<keyword id="KW-0804">Transcription</keyword>
<keyword id="KW-0805">Transcription regulation</keyword>
<comment type="function">
    <text evidence="1">Is the main repressor of the genes involved in the de novo synthesis of purine nucleotides, regulating purB, purC, purEK, purF, purHD, purL, purMN and guaBA expression. PurR is allosterically activated to bind its cognate DNA by binding the purine corepressors, hypoxanthine or guanine, thereby effecting transcription repression.</text>
</comment>
<comment type="pathway">
    <text>Purine metabolism; purine nucleotide biosynthesis [regulation].</text>
</comment>
<comment type="subunit">
    <text evidence="1">Homodimer.</text>
</comment>
<comment type="domain">
    <text evidence="1">Consists of two structural and functional domains: an N-terminal DNA-binding domain, approximately the first 60 residues, and a larger C-terminal domain, approximately 280 residues, which imparts the function of corepressor binding and oligomerization.</text>
</comment>
<protein>
    <recommendedName>
        <fullName evidence="1">HTH-type transcriptional repressor PurR</fullName>
    </recommendedName>
    <alternativeName>
        <fullName evidence="1">Pur regulon repressor</fullName>
    </alternativeName>
    <alternativeName>
        <fullName evidence="1">Purine nucleotide synthesis repressor</fullName>
    </alternativeName>
</protein>
<dbReference type="EMBL" id="AM933172">
    <property type="protein sequence ID" value="CAR33199.1"/>
    <property type="molecule type" value="Genomic_DNA"/>
</dbReference>
<dbReference type="RefSeq" id="WP_000190993.1">
    <property type="nucleotide sequence ID" value="NC_011294.1"/>
</dbReference>
<dbReference type="SMR" id="B5QV29"/>
<dbReference type="KEGG" id="set:SEN1617"/>
<dbReference type="HOGENOM" id="CLU_037628_6_2_6"/>
<dbReference type="UniPathway" id="UPA00488"/>
<dbReference type="Proteomes" id="UP000000613">
    <property type="component" value="Chromosome"/>
</dbReference>
<dbReference type="GO" id="GO:0003700">
    <property type="term" value="F:DNA-binding transcription factor activity"/>
    <property type="evidence" value="ECO:0007669"/>
    <property type="project" value="TreeGrafter"/>
</dbReference>
<dbReference type="GO" id="GO:0000976">
    <property type="term" value="F:transcription cis-regulatory region binding"/>
    <property type="evidence" value="ECO:0007669"/>
    <property type="project" value="TreeGrafter"/>
</dbReference>
<dbReference type="GO" id="GO:0045892">
    <property type="term" value="P:negative regulation of DNA-templated transcription"/>
    <property type="evidence" value="ECO:0007669"/>
    <property type="project" value="UniProtKB-UniRule"/>
</dbReference>
<dbReference type="GO" id="GO:0006164">
    <property type="term" value="P:purine nucleotide biosynthetic process"/>
    <property type="evidence" value="ECO:0007669"/>
    <property type="project" value="UniProtKB-UniPathway"/>
</dbReference>
<dbReference type="CDD" id="cd01392">
    <property type="entry name" value="HTH_LacI"/>
    <property type="match status" value="1"/>
</dbReference>
<dbReference type="CDD" id="cd06275">
    <property type="entry name" value="PBP1_PurR"/>
    <property type="match status" value="1"/>
</dbReference>
<dbReference type="FunFam" id="1.10.260.40:FF:000002">
    <property type="entry name" value="HTH-type transcriptional repressor PurR"/>
    <property type="match status" value="1"/>
</dbReference>
<dbReference type="FunFam" id="3.40.50.2300:FF:000045">
    <property type="entry name" value="HTH-type transcriptional repressor PurR"/>
    <property type="match status" value="1"/>
</dbReference>
<dbReference type="Gene3D" id="3.40.50.2300">
    <property type="match status" value="2"/>
</dbReference>
<dbReference type="Gene3D" id="1.10.260.40">
    <property type="entry name" value="lambda repressor-like DNA-binding domains"/>
    <property type="match status" value="1"/>
</dbReference>
<dbReference type="HAMAP" id="MF_01277">
    <property type="entry name" value="HTH_type_PurR"/>
    <property type="match status" value="1"/>
</dbReference>
<dbReference type="InterPro" id="IPR000843">
    <property type="entry name" value="HTH_LacI"/>
</dbReference>
<dbReference type="InterPro" id="IPR046335">
    <property type="entry name" value="LacI/GalR-like_sensor"/>
</dbReference>
<dbReference type="InterPro" id="IPR010982">
    <property type="entry name" value="Lambda_DNA-bd_dom_sf"/>
</dbReference>
<dbReference type="InterPro" id="IPR028082">
    <property type="entry name" value="Peripla_BP_I"/>
</dbReference>
<dbReference type="InterPro" id="IPR023588">
    <property type="entry name" value="Tscrpt_reg_HTH_PurR"/>
</dbReference>
<dbReference type="NCBIfam" id="NF007979">
    <property type="entry name" value="PRK10703.1"/>
    <property type="match status" value="1"/>
</dbReference>
<dbReference type="PANTHER" id="PTHR30146:SF148">
    <property type="entry name" value="HTH-TYPE TRANSCRIPTIONAL REPRESSOR PURR-RELATED"/>
    <property type="match status" value="1"/>
</dbReference>
<dbReference type="PANTHER" id="PTHR30146">
    <property type="entry name" value="LACI-RELATED TRANSCRIPTIONAL REPRESSOR"/>
    <property type="match status" value="1"/>
</dbReference>
<dbReference type="Pfam" id="PF00356">
    <property type="entry name" value="LacI"/>
    <property type="match status" value="1"/>
</dbReference>
<dbReference type="Pfam" id="PF13377">
    <property type="entry name" value="Peripla_BP_3"/>
    <property type="match status" value="1"/>
</dbReference>
<dbReference type="PRINTS" id="PR00036">
    <property type="entry name" value="HTHLACI"/>
</dbReference>
<dbReference type="SMART" id="SM00354">
    <property type="entry name" value="HTH_LACI"/>
    <property type="match status" value="1"/>
</dbReference>
<dbReference type="SUPFAM" id="SSF47413">
    <property type="entry name" value="lambda repressor-like DNA-binding domains"/>
    <property type="match status" value="1"/>
</dbReference>
<dbReference type="SUPFAM" id="SSF53822">
    <property type="entry name" value="Periplasmic binding protein-like I"/>
    <property type="match status" value="1"/>
</dbReference>
<dbReference type="PROSITE" id="PS00356">
    <property type="entry name" value="HTH_LACI_1"/>
    <property type="match status" value="1"/>
</dbReference>
<dbReference type="PROSITE" id="PS50932">
    <property type="entry name" value="HTH_LACI_2"/>
    <property type="match status" value="1"/>
</dbReference>
<name>PURR_SALEP</name>
<accession>B5QV29</accession>
<organism>
    <name type="scientific">Salmonella enteritidis PT4 (strain P125109)</name>
    <dbReference type="NCBI Taxonomy" id="550537"/>
    <lineage>
        <taxon>Bacteria</taxon>
        <taxon>Pseudomonadati</taxon>
        <taxon>Pseudomonadota</taxon>
        <taxon>Gammaproteobacteria</taxon>
        <taxon>Enterobacterales</taxon>
        <taxon>Enterobacteriaceae</taxon>
        <taxon>Salmonella</taxon>
    </lineage>
</organism>
<sequence length="341" mass="38048">MATIKDVAKRANVSTTTVSHVINKTRFVAEETRNAVWAAIKELHYSPSAVARSLKVNHTKSIGLLATSSEAAYFAEIIEAVEKNCFQKGYTLILGNAWNNLEKQRAYLSMMAQKRVDGLLVMCSEYPEPLLSMLEEYRHIPMVVMDWGEAKADFTDTVIDNAFAGGYMAGRYLVERGHRDIGVIPGPLERNTGAGRLAGFMKAMEEALINVPDNWIVQGDFEPESGYHAMQQILSQSHRPTAVFCGGDIMAMGALCAADEMGLRVPQDVSVIGYDNVRNARYFTPALTTIHQPKDSLGETAFNMLLDRIVNKREESQSIEVHPRLVERRSVADGPFRDYRR</sequence>
<feature type="chain" id="PRO_1000140299" description="HTH-type transcriptional repressor PurR">
    <location>
        <begin position="1"/>
        <end position="341"/>
    </location>
</feature>
<feature type="domain" description="HTH lacI-type" evidence="1">
    <location>
        <begin position="2"/>
        <end position="56"/>
    </location>
</feature>
<feature type="DNA-binding region" description="H-T-H motif" evidence="1">
    <location>
        <begin position="4"/>
        <end position="23"/>
    </location>
</feature>
<feature type="DNA-binding region" evidence="1">
    <location>
        <begin position="48"/>
        <end position="56"/>
    </location>
</feature>
<feature type="binding site" evidence="1">
    <location>
        <position position="73"/>
    </location>
    <ligand>
        <name>hypoxanthine</name>
        <dbReference type="ChEBI" id="CHEBI:17368"/>
    </ligand>
</feature>
<feature type="binding site" evidence="1">
    <location>
        <position position="190"/>
    </location>
    <ligand>
        <name>hypoxanthine</name>
        <dbReference type="ChEBI" id="CHEBI:17368"/>
    </ligand>
</feature>
<feature type="binding site" evidence="1">
    <location>
        <position position="192"/>
    </location>
    <ligand>
        <name>hypoxanthine</name>
        <dbReference type="ChEBI" id="CHEBI:17368"/>
    </ligand>
</feature>
<feature type="binding site" evidence="1">
    <location>
        <position position="221"/>
    </location>
    <ligand>
        <name>hypoxanthine</name>
        <dbReference type="ChEBI" id="CHEBI:17368"/>
    </ligand>
</feature>
<feature type="binding site" evidence="1">
    <location>
        <position position="275"/>
    </location>
    <ligand>
        <name>hypoxanthine</name>
        <dbReference type="ChEBI" id="CHEBI:17368"/>
    </ligand>
</feature>
<gene>
    <name evidence="1" type="primary">purR</name>
    <name type="ordered locus">SEN1617</name>
</gene>